<name>RL2_STRPB</name>
<sequence>MGIKVYKPTTNGRRNMTSLDFAEITTSTPEKSLLVSLKSKAGRNNNGRITVRHQGGGHKRHYRLIDFKRNKDGVEAVVKTIEYDPNRTANIALVHYTDGVKAYIIAPKGLEVGQRIVSGPDADIKVGNALPLANIPVGTVVHNIELKPGKGGELVRAAGASAQVLGQEGKYVLVRLQSGEVRMILGTCRATIGTVGNEQQSLVNIGKAGRSRWKGIRPTVRGSVMNPNDHPHGGGEGKAPVGRKAPSTPWGKPALGLKTRNKKAKSDKLIVRRRNEK</sequence>
<evidence type="ECO:0000255" key="1">
    <source>
        <dbReference type="HAMAP-Rule" id="MF_01320"/>
    </source>
</evidence>
<evidence type="ECO:0000256" key="2">
    <source>
        <dbReference type="SAM" id="MobiDB-lite"/>
    </source>
</evidence>
<evidence type="ECO:0000305" key="3"/>
<protein>
    <recommendedName>
        <fullName evidence="1">Large ribosomal subunit protein uL2</fullName>
    </recommendedName>
    <alternativeName>
        <fullName evidence="3">50S ribosomal protein L2</fullName>
    </alternativeName>
</protein>
<accession>Q1JE55</accession>
<keyword id="KW-0687">Ribonucleoprotein</keyword>
<keyword id="KW-0689">Ribosomal protein</keyword>
<keyword id="KW-0694">RNA-binding</keyword>
<keyword id="KW-0699">rRNA-binding</keyword>
<reference key="1">
    <citation type="journal article" date="2006" name="Proc. Natl. Acad. Sci. U.S.A.">
        <title>Molecular genetic anatomy of inter- and intraserotype variation in the human bacterial pathogen group A Streptococcus.</title>
        <authorList>
            <person name="Beres S.B."/>
            <person name="Richter E.W."/>
            <person name="Nagiec M.J."/>
            <person name="Sumby P."/>
            <person name="Porcella S.F."/>
            <person name="DeLeo F.R."/>
            <person name="Musser J.M."/>
        </authorList>
    </citation>
    <scope>NUCLEOTIDE SEQUENCE [LARGE SCALE GENOMIC DNA]</scope>
    <source>
        <strain>MGAS2096</strain>
    </source>
</reference>
<gene>
    <name evidence="1" type="primary">rplB</name>
    <name type="ordered locus">MGAS2096_Spy0051</name>
</gene>
<organism>
    <name type="scientific">Streptococcus pyogenes serotype M12 (strain MGAS2096)</name>
    <dbReference type="NCBI Taxonomy" id="370553"/>
    <lineage>
        <taxon>Bacteria</taxon>
        <taxon>Bacillati</taxon>
        <taxon>Bacillota</taxon>
        <taxon>Bacilli</taxon>
        <taxon>Lactobacillales</taxon>
        <taxon>Streptococcaceae</taxon>
        <taxon>Streptococcus</taxon>
    </lineage>
</organism>
<comment type="function">
    <text evidence="1">One of the primary rRNA binding proteins. Required for association of the 30S and 50S subunits to form the 70S ribosome, for tRNA binding and peptide bond formation. It has been suggested to have peptidyltransferase activity; this is somewhat controversial. Makes several contacts with the 16S rRNA in the 70S ribosome.</text>
</comment>
<comment type="subunit">
    <text evidence="1">Part of the 50S ribosomal subunit. Forms a bridge to the 30S subunit in the 70S ribosome.</text>
</comment>
<comment type="similarity">
    <text evidence="1">Belongs to the universal ribosomal protein uL2 family.</text>
</comment>
<dbReference type="EMBL" id="CP000261">
    <property type="protein sequence ID" value="ABF35103.1"/>
    <property type="molecule type" value="Genomic_DNA"/>
</dbReference>
<dbReference type="SMR" id="Q1JE55"/>
<dbReference type="KEGG" id="spj:MGAS2096_Spy0051"/>
<dbReference type="HOGENOM" id="CLU_036235_2_1_9"/>
<dbReference type="GO" id="GO:0015934">
    <property type="term" value="C:large ribosomal subunit"/>
    <property type="evidence" value="ECO:0007669"/>
    <property type="project" value="InterPro"/>
</dbReference>
<dbReference type="GO" id="GO:0019843">
    <property type="term" value="F:rRNA binding"/>
    <property type="evidence" value="ECO:0007669"/>
    <property type="project" value="UniProtKB-UniRule"/>
</dbReference>
<dbReference type="GO" id="GO:0003735">
    <property type="term" value="F:structural constituent of ribosome"/>
    <property type="evidence" value="ECO:0007669"/>
    <property type="project" value="InterPro"/>
</dbReference>
<dbReference type="GO" id="GO:0016740">
    <property type="term" value="F:transferase activity"/>
    <property type="evidence" value="ECO:0007669"/>
    <property type="project" value="InterPro"/>
</dbReference>
<dbReference type="GO" id="GO:0002181">
    <property type="term" value="P:cytoplasmic translation"/>
    <property type="evidence" value="ECO:0007669"/>
    <property type="project" value="TreeGrafter"/>
</dbReference>
<dbReference type="FunFam" id="2.30.30.30:FF:000001">
    <property type="entry name" value="50S ribosomal protein L2"/>
    <property type="match status" value="1"/>
</dbReference>
<dbReference type="FunFam" id="2.40.50.140:FF:000003">
    <property type="entry name" value="50S ribosomal protein L2"/>
    <property type="match status" value="1"/>
</dbReference>
<dbReference type="FunFam" id="4.10.950.10:FF:000001">
    <property type="entry name" value="50S ribosomal protein L2"/>
    <property type="match status" value="1"/>
</dbReference>
<dbReference type="Gene3D" id="2.30.30.30">
    <property type="match status" value="1"/>
</dbReference>
<dbReference type="Gene3D" id="2.40.50.140">
    <property type="entry name" value="Nucleic acid-binding proteins"/>
    <property type="match status" value="1"/>
</dbReference>
<dbReference type="Gene3D" id="4.10.950.10">
    <property type="entry name" value="Ribosomal protein L2, domain 3"/>
    <property type="match status" value="1"/>
</dbReference>
<dbReference type="HAMAP" id="MF_01320_B">
    <property type="entry name" value="Ribosomal_uL2_B"/>
    <property type="match status" value="1"/>
</dbReference>
<dbReference type="InterPro" id="IPR012340">
    <property type="entry name" value="NA-bd_OB-fold"/>
</dbReference>
<dbReference type="InterPro" id="IPR014722">
    <property type="entry name" value="Rib_uL2_dom2"/>
</dbReference>
<dbReference type="InterPro" id="IPR002171">
    <property type="entry name" value="Ribosomal_uL2"/>
</dbReference>
<dbReference type="InterPro" id="IPR005880">
    <property type="entry name" value="Ribosomal_uL2_bac/org-type"/>
</dbReference>
<dbReference type="InterPro" id="IPR022669">
    <property type="entry name" value="Ribosomal_uL2_C"/>
</dbReference>
<dbReference type="InterPro" id="IPR022671">
    <property type="entry name" value="Ribosomal_uL2_CS"/>
</dbReference>
<dbReference type="InterPro" id="IPR014726">
    <property type="entry name" value="Ribosomal_uL2_dom3"/>
</dbReference>
<dbReference type="InterPro" id="IPR022666">
    <property type="entry name" value="Ribosomal_uL2_RNA-bd_dom"/>
</dbReference>
<dbReference type="InterPro" id="IPR008991">
    <property type="entry name" value="Translation_prot_SH3-like_sf"/>
</dbReference>
<dbReference type="NCBIfam" id="TIGR01171">
    <property type="entry name" value="rplB_bact"/>
    <property type="match status" value="1"/>
</dbReference>
<dbReference type="PANTHER" id="PTHR13691:SF5">
    <property type="entry name" value="LARGE RIBOSOMAL SUBUNIT PROTEIN UL2M"/>
    <property type="match status" value="1"/>
</dbReference>
<dbReference type="PANTHER" id="PTHR13691">
    <property type="entry name" value="RIBOSOMAL PROTEIN L2"/>
    <property type="match status" value="1"/>
</dbReference>
<dbReference type="Pfam" id="PF00181">
    <property type="entry name" value="Ribosomal_L2"/>
    <property type="match status" value="1"/>
</dbReference>
<dbReference type="Pfam" id="PF03947">
    <property type="entry name" value="Ribosomal_L2_C"/>
    <property type="match status" value="1"/>
</dbReference>
<dbReference type="PIRSF" id="PIRSF002158">
    <property type="entry name" value="Ribosomal_L2"/>
    <property type="match status" value="1"/>
</dbReference>
<dbReference type="SMART" id="SM01383">
    <property type="entry name" value="Ribosomal_L2"/>
    <property type="match status" value="1"/>
</dbReference>
<dbReference type="SMART" id="SM01382">
    <property type="entry name" value="Ribosomal_L2_C"/>
    <property type="match status" value="1"/>
</dbReference>
<dbReference type="SUPFAM" id="SSF50249">
    <property type="entry name" value="Nucleic acid-binding proteins"/>
    <property type="match status" value="1"/>
</dbReference>
<dbReference type="SUPFAM" id="SSF50104">
    <property type="entry name" value="Translation proteins SH3-like domain"/>
    <property type="match status" value="1"/>
</dbReference>
<dbReference type="PROSITE" id="PS00467">
    <property type="entry name" value="RIBOSOMAL_L2"/>
    <property type="match status" value="1"/>
</dbReference>
<proteinExistence type="inferred from homology"/>
<feature type="chain" id="PRO_0000310021" description="Large ribosomal subunit protein uL2">
    <location>
        <begin position="1"/>
        <end position="277"/>
    </location>
</feature>
<feature type="region of interest" description="Disordered" evidence="2">
    <location>
        <begin position="219"/>
        <end position="277"/>
    </location>
</feature>
<feature type="compositionally biased region" description="Basic and acidic residues" evidence="2">
    <location>
        <begin position="264"/>
        <end position="277"/>
    </location>
</feature>